<sequence length="236" mass="24917">MTNPPSTDYSRAGAGLRIGVLALQGDFREHLRAAEATGATGIGIRRPSELDGIDGLIIPGGESTAIDKLARAFELADPLRKLIAEGLPVYGSCAGMILLADEIADPATDLAGNPQQTFGGLDITVRRNAFGRQRESFEIDLEFKGLGFSDTGSGVAPVHAVFIRGPWVERVGPGVEVLAQVEPADPAHASHAAALQGTARIVAVRSGHLLATSFHPEVTGEKRVHELFIRMIRGEA</sequence>
<organism>
    <name type="scientific">Arthrobacter sp. (strain FB24)</name>
    <dbReference type="NCBI Taxonomy" id="290399"/>
    <lineage>
        <taxon>Bacteria</taxon>
        <taxon>Bacillati</taxon>
        <taxon>Actinomycetota</taxon>
        <taxon>Actinomycetes</taxon>
        <taxon>Micrococcales</taxon>
        <taxon>Micrococcaceae</taxon>
        <taxon>Arthrobacter</taxon>
    </lineage>
</organism>
<keyword id="KW-0315">Glutamine amidotransferase</keyword>
<keyword id="KW-0378">Hydrolase</keyword>
<keyword id="KW-0456">Lyase</keyword>
<keyword id="KW-0663">Pyridoxal phosphate</keyword>
<keyword id="KW-1185">Reference proteome</keyword>
<gene>
    <name evidence="1" type="primary">pdxT</name>
    <name type="ordered locus">Arth_2305</name>
</gene>
<reference key="1">
    <citation type="journal article" date="2013" name="Stand. Genomic Sci.">
        <title>Complete genome sequence of Arthrobacter sp. strain FB24.</title>
        <authorList>
            <person name="Nakatsu C.H."/>
            <person name="Barabote R."/>
            <person name="Thompson S."/>
            <person name="Bruce D."/>
            <person name="Detter C."/>
            <person name="Brettin T."/>
            <person name="Han C."/>
            <person name="Beasley F."/>
            <person name="Chen W."/>
            <person name="Konopka A."/>
            <person name="Xie G."/>
        </authorList>
    </citation>
    <scope>NUCLEOTIDE SEQUENCE [LARGE SCALE GENOMIC DNA]</scope>
    <source>
        <strain>FB24</strain>
    </source>
</reference>
<feature type="chain" id="PRO_0000292992" description="Pyridoxal 5'-phosphate synthase subunit PdxT">
    <location>
        <begin position="1"/>
        <end position="236"/>
    </location>
</feature>
<feature type="active site" description="Nucleophile" evidence="1">
    <location>
        <position position="93"/>
    </location>
</feature>
<feature type="active site" description="Charge relay system" evidence="1">
    <location>
        <position position="215"/>
    </location>
</feature>
<feature type="active site" description="Charge relay system" evidence="1">
    <location>
        <position position="217"/>
    </location>
</feature>
<feature type="binding site" evidence="1">
    <location>
        <begin position="61"/>
        <end position="63"/>
    </location>
    <ligand>
        <name>L-glutamine</name>
        <dbReference type="ChEBI" id="CHEBI:58359"/>
    </ligand>
</feature>
<feature type="binding site" evidence="1">
    <location>
        <position position="127"/>
    </location>
    <ligand>
        <name>L-glutamine</name>
        <dbReference type="ChEBI" id="CHEBI:58359"/>
    </ligand>
</feature>
<feature type="binding site" evidence="1">
    <location>
        <begin position="163"/>
        <end position="164"/>
    </location>
    <ligand>
        <name>L-glutamine</name>
        <dbReference type="ChEBI" id="CHEBI:58359"/>
    </ligand>
</feature>
<evidence type="ECO:0000255" key="1">
    <source>
        <dbReference type="HAMAP-Rule" id="MF_01615"/>
    </source>
</evidence>
<dbReference type="EC" id="4.3.3.6" evidence="1"/>
<dbReference type="EC" id="3.5.1.2" evidence="1"/>
<dbReference type="EMBL" id="CP000454">
    <property type="protein sequence ID" value="ABK03685.1"/>
    <property type="molecule type" value="Genomic_DNA"/>
</dbReference>
<dbReference type="RefSeq" id="WP_011692149.1">
    <property type="nucleotide sequence ID" value="NC_008541.1"/>
</dbReference>
<dbReference type="SMR" id="A0JXB5"/>
<dbReference type="STRING" id="290399.Arth_2305"/>
<dbReference type="KEGG" id="art:Arth_2305"/>
<dbReference type="eggNOG" id="COG0311">
    <property type="taxonomic scope" value="Bacteria"/>
</dbReference>
<dbReference type="HOGENOM" id="CLU_069674_2_0_11"/>
<dbReference type="OrthoDB" id="9810320at2"/>
<dbReference type="UniPathway" id="UPA00245"/>
<dbReference type="Proteomes" id="UP000000754">
    <property type="component" value="Chromosome"/>
</dbReference>
<dbReference type="GO" id="GO:0005829">
    <property type="term" value="C:cytosol"/>
    <property type="evidence" value="ECO:0007669"/>
    <property type="project" value="TreeGrafter"/>
</dbReference>
<dbReference type="GO" id="GO:1903600">
    <property type="term" value="C:glutaminase complex"/>
    <property type="evidence" value="ECO:0007669"/>
    <property type="project" value="TreeGrafter"/>
</dbReference>
<dbReference type="GO" id="GO:0004359">
    <property type="term" value="F:glutaminase activity"/>
    <property type="evidence" value="ECO:0007669"/>
    <property type="project" value="UniProtKB-UniRule"/>
</dbReference>
<dbReference type="GO" id="GO:0036381">
    <property type="term" value="F:pyridoxal 5'-phosphate synthase (glutamine hydrolysing) activity"/>
    <property type="evidence" value="ECO:0007669"/>
    <property type="project" value="UniProtKB-UniRule"/>
</dbReference>
<dbReference type="GO" id="GO:0006543">
    <property type="term" value="P:glutamine catabolic process"/>
    <property type="evidence" value="ECO:0007669"/>
    <property type="project" value="UniProtKB-UniRule"/>
</dbReference>
<dbReference type="GO" id="GO:0042823">
    <property type="term" value="P:pyridoxal phosphate biosynthetic process"/>
    <property type="evidence" value="ECO:0007669"/>
    <property type="project" value="UniProtKB-UniRule"/>
</dbReference>
<dbReference type="GO" id="GO:0008614">
    <property type="term" value="P:pyridoxine metabolic process"/>
    <property type="evidence" value="ECO:0007669"/>
    <property type="project" value="TreeGrafter"/>
</dbReference>
<dbReference type="CDD" id="cd01749">
    <property type="entry name" value="GATase1_PB"/>
    <property type="match status" value="1"/>
</dbReference>
<dbReference type="FunFam" id="3.40.50.880:FF:000010">
    <property type="entry name" value="uncharacterized protein LOC100176842 isoform X2"/>
    <property type="match status" value="1"/>
</dbReference>
<dbReference type="Gene3D" id="3.40.50.880">
    <property type="match status" value="1"/>
</dbReference>
<dbReference type="HAMAP" id="MF_01615">
    <property type="entry name" value="PdxT"/>
    <property type="match status" value="1"/>
</dbReference>
<dbReference type="InterPro" id="IPR029062">
    <property type="entry name" value="Class_I_gatase-like"/>
</dbReference>
<dbReference type="InterPro" id="IPR002161">
    <property type="entry name" value="PdxT/SNO"/>
</dbReference>
<dbReference type="InterPro" id="IPR021196">
    <property type="entry name" value="PdxT/SNO_CS"/>
</dbReference>
<dbReference type="NCBIfam" id="TIGR03800">
    <property type="entry name" value="PLP_synth_Pdx2"/>
    <property type="match status" value="1"/>
</dbReference>
<dbReference type="PANTHER" id="PTHR31559">
    <property type="entry name" value="PYRIDOXAL 5'-PHOSPHATE SYNTHASE SUBUNIT SNO"/>
    <property type="match status" value="1"/>
</dbReference>
<dbReference type="PANTHER" id="PTHR31559:SF0">
    <property type="entry name" value="PYRIDOXAL 5'-PHOSPHATE SYNTHASE SUBUNIT SNO1-RELATED"/>
    <property type="match status" value="1"/>
</dbReference>
<dbReference type="Pfam" id="PF01174">
    <property type="entry name" value="SNO"/>
    <property type="match status" value="1"/>
</dbReference>
<dbReference type="PIRSF" id="PIRSF005639">
    <property type="entry name" value="Glut_amidoT_SNO"/>
    <property type="match status" value="1"/>
</dbReference>
<dbReference type="SUPFAM" id="SSF52317">
    <property type="entry name" value="Class I glutamine amidotransferase-like"/>
    <property type="match status" value="1"/>
</dbReference>
<dbReference type="PROSITE" id="PS01236">
    <property type="entry name" value="PDXT_SNO_1"/>
    <property type="match status" value="1"/>
</dbReference>
<dbReference type="PROSITE" id="PS51130">
    <property type="entry name" value="PDXT_SNO_2"/>
    <property type="match status" value="1"/>
</dbReference>
<accession>A0JXB5</accession>
<comment type="function">
    <text evidence="1">Catalyzes the hydrolysis of glutamine to glutamate and ammonia as part of the biosynthesis of pyridoxal 5'-phosphate. The resulting ammonia molecule is channeled to the active site of PdxS.</text>
</comment>
<comment type="catalytic activity">
    <reaction evidence="1">
        <text>aldehydo-D-ribose 5-phosphate + D-glyceraldehyde 3-phosphate + L-glutamine = pyridoxal 5'-phosphate + L-glutamate + phosphate + 3 H2O + H(+)</text>
        <dbReference type="Rhea" id="RHEA:31507"/>
        <dbReference type="ChEBI" id="CHEBI:15377"/>
        <dbReference type="ChEBI" id="CHEBI:15378"/>
        <dbReference type="ChEBI" id="CHEBI:29985"/>
        <dbReference type="ChEBI" id="CHEBI:43474"/>
        <dbReference type="ChEBI" id="CHEBI:58273"/>
        <dbReference type="ChEBI" id="CHEBI:58359"/>
        <dbReference type="ChEBI" id="CHEBI:59776"/>
        <dbReference type="ChEBI" id="CHEBI:597326"/>
        <dbReference type="EC" id="4.3.3.6"/>
    </reaction>
</comment>
<comment type="catalytic activity">
    <reaction evidence="1">
        <text>L-glutamine + H2O = L-glutamate + NH4(+)</text>
        <dbReference type="Rhea" id="RHEA:15889"/>
        <dbReference type="ChEBI" id="CHEBI:15377"/>
        <dbReference type="ChEBI" id="CHEBI:28938"/>
        <dbReference type="ChEBI" id="CHEBI:29985"/>
        <dbReference type="ChEBI" id="CHEBI:58359"/>
        <dbReference type="EC" id="3.5.1.2"/>
    </reaction>
</comment>
<comment type="pathway">
    <text evidence="1">Cofactor biosynthesis; pyridoxal 5'-phosphate biosynthesis.</text>
</comment>
<comment type="subunit">
    <text evidence="1">In the presence of PdxS, forms a dodecamer of heterodimers. Only shows activity in the heterodimer.</text>
</comment>
<comment type="similarity">
    <text evidence="1">Belongs to the glutaminase PdxT/SNO family.</text>
</comment>
<protein>
    <recommendedName>
        <fullName evidence="1">Pyridoxal 5'-phosphate synthase subunit PdxT</fullName>
        <ecNumber evidence="1">4.3.3.6</ecNumber>
    </recommendedName>
    <alternativeName>
        <fullName evidence="1">Pdx2</fullName>
    </alternativeName>
    <alternativeName>
        <fullName evidence="1">Pyridoxal 5'-phosphate synthase glutaminase subunit</fullName>
        <ecNumber evidence="1">3.5.1.2</ecNumber>
    </alternativeName>
</protein>
<proteinExistence type="inferred from homology"/>
<name>PDXT_ARTS2</name>